<keyword id="KW-0002">3D-structure</keyword>
<keyword id="KW-0067">ATP-binding</keyword>
<keyword id="KW-0963">Cytoplasm</keyword>
<keyword id="KW-0418">Kinase</keyword>
<keyword id="KW-0547">Nucleotide-binding</keyword>
<keyword id="KW-0665">Pyrimidine biosynthesis</keyword>
<keyword id="KW-1185">Reference proteome</keyword>
<keyword id="KW-0808">Transferase</keyword>
<gene>
    <name type="primary">pyrH</name>
    <name type="ordered locus">UU513</name>
</gene>
<feature type="chain" id="PRO_0000143902" description="Uridylate kinase">
    <location>
        <begin position="1"/>
        <end position="235"/>
    </location>
</feature>
<feature type="binding site" evidence="1">
    <location>
        <begin position="9"/>
        <end position="12"/>
    </location>
    <ligand>
        <name>ATP</name>
        <dbReference type="ChEBI" id="CHEBI:30616"/>
    </ligand>
</feature>
<feature type="binding site" evidence="1">
    <location>
        <position position="50"/>
    </location>
    <ligand>
        <name>UMP</name>
        <dbReference type="ChEBI" id="CHEBI:57865"/>
    </ligand>
</feature>
<feature type="binding site" evidence="1">
    <location>
        <position position="51"/>
    </location>
    <ligand>
        <name>ATP</name>
        <dbReference type="ChEBI" id="CHEBI:30616"/>
    </ligand>
</feature>
<feature type="binding site" evidence="1">
    <location>
        <position position="55"/>
    </location>
    <ligand>
        <name>ATP</name>
        <dbReference type="ChEBI" id="CHEBI:30616"/>
    </ligand>
</feature>
<feature type="binding site" evidence="1">
    <location>
        <position position="70"/>
    </location>
    <ligand>
        <name>UMP</name>
        <dbReference type="ChEBI" id="CHEBI:57865"/>
    </ligand>
</feature>
<feature type="binding site" evidence="1">
    <location>
        <begin position="131"/>
        <end position="138"/>
    </location>
    <ligand>
        <name>UMP</name>
        <dbReference type="ChEBI" id="CHEBI:57865"/>
    </ligand>
</feature>
<feature type="binding site" evidence="1">
    <location>
        <position position="159"/>
    </location>
    <ligand>
        <name>ATP</name>
        <dbReference type="ChEBI" id="CHEBI:30616"/>
    </ligand>
</feature>
<feature type="binding site" evidence="1">
    <location>
        <position position="165"/>
    </location>
    <ligand>
        <name>ATP</name>
        <dbReference type="ChEBI" id="CHEBI:30616"/>
    </ligand>
</feature>
<feature type="binding site" evidence="1">
    <location>
        <position position="168"/>
    </location>
    <ligand>
        <name>ATP</name>
        <dbReference type="ChEBI" id="CHEBI:30616"/>
    </ligand>
</feature>
<feature type="mutagenesis site" description="Still no activation by GTP. Exhibits negative cooperativity with UMP. Marked decrease in activity." evidence="3">
    <original>F</original>
    <variation>N</variation>
    <variation>A</variation>
    <location>
        <position position="133"/>
    </location>
</feature>
<feature type="strand" evidence="5">
    <location>
        <begin position="4"/>
        <end position="10"/>
    </location>
</feature>
<feature type="helix" evidence="5">
    <location>
        <begin position="12"/>
        <end position="15"/>
    </location>
</feature>
<feature type="helix" evidence="5">
    <location>
        <begin position="25"/>
        <end position="38"/>
    </location>
</feature>
<feature type="turn" evidence="5">
    <location>
        <begin position="39"/>
        <end position="41"/>
    </location>
</feature>
<feature type="strand" evidence="5">
    <location>
        <begin position="42"/>
        <end position="48"/>
    </location>
</feature>
<feature type="turn" evidence="5">
    <location>
        <begin position="51"/>
        <end position="53"/>
    </location>
</feature>
<feature type="helix" evidence="5">
    <location>
        <begin position="56"/>
        <end position="61"/>
    </location>
</feature>
<feature type="helix" evidence="5">
    <location>
        <begin position="66"/>
        <end position="89"/>
    </location>
</feature>
<feature type="turn" evidence="5">
    <location>
        <begin position="90"/>
        <end position="92"/>
    </location>
</feature>
<feature type="strand" evidence="5">
    <location>
        <begin position="95"/>
        <end position="101"/>
    </location>
</feature>
<feature type="turn" evidence="5">
    <location>
        <begin position="104"/>
        <end position="106"/>
    </location>
</feature>
<feature type="helix" evidence="5">
    <location>
        <begin position="112"/>
        <end position="120"/>
    </location>
</feature>
<feature type="strand" evidence="5">
    <location>
        <begin position="124"/>
        <end position="129"/>
    </location>
</feature>
<feature type="strand" evidence="5">
    <location>
        <begin position="132"/>
        <end position="135"/>
    </location>
</feature>
<feature type="helix" evidence="5">
    <location>
        <begin position="138"/>
        <end position="149"/>
    </location>
</feature>
<feature type="strand" evidence="5">
    <location>
        <begin position="152"/>
        <end position="160"/>
    </location>
</feature>
<feature type="turn" evidence="5">
    <location>
        <begin position="169"/>
        <end position="171"/>
    </location>
</feature>
<feature type="strand" evidence="5">
    <location>
        <begin position="178"/>
        <end position="182"/>
    </location>
</feature>
<feature type="helix" evidence="5">
    <location>
        <begin position="183"/>
        <end position="189"/>
    </location>
</feature>
<feature type="helix" evidence="5">
    <location>
        <begin position="196"/>
        <end position="204"/>
    </location>
</feature>
<feature type="strand" evidence="5">
    <location>
        <begin position="208"/>
        <end position="216"/>
    </location>
</feature>
<feature type="helix" evidence="5">
    <location>
        <begin position="219"/>
        <end position="224"/>
    </location>
</feature>
<feature type="strand" evidence="5">
    <location>
        <begin position="231"/>
        <end position="234"/>
    </location>
</feature>
<sequence>MRKQRIVIKISGACLKQNDSSIIDFIKINDLAEQIEKISKKYIVSIVLGGGNIWRGSIAKELDMDRNLADNMGMMATIINGLALENALNHLNVNTIVLSAIKCDKLVHESSANNIKKAIEKEQVMIFVAGTGFPYFTTDSCAAIRAAETESSIILMGKNGVDGVYDSDPKINPNAQFYEHITFNMALTQNLKVMDATALALCQENNINLLVFNIDKPNAIVDVLEKKNKYTIVSK</sequence>
<proteinExistence type="evidence at protein level"/>
<comment type="function">
    <text evidence="2 3">Catalyzes the reversible phosphorylation of UMP to UDP, with ATP as the most efficient phosphate donor. Is also able to phosphorylate dUMP.</text>
</comment>
<comment type="catalytic activity">
    <reaction>
        <text>UMP + ATP = UDP + ADP</text>
        <dbReference type="Rhea" id="RHEA:24400"/>
        <dbReference type="ChEBI" id="CHEBI:30616"/>
        <dbReference type="ChEBI" id="CHEBI:57865"/>
        <dbReference type="ChEBI" id="CHEBI:58223"/>
        <dbReference type="ChEBI" id="CHEBI:456216"/>
        <dbReference type="EC" id="2.7.4.22"/>
    </reaction>
</comment>
<comment type="activity regulation">
    <text evidence="3">Unlike other bacteria, is not activated by GTP. UTP is a competitive inhibitor against UMP and a non-competitive inhibitor toward ATP.</text>
</comment>
<comment type="biophysicochemical properties">
    <kinetics>
        <KM evidence="3">214 uM for UMP</KM>
        <Vmax evidence="3">262.0 umol/min/mg enzyme</Vmax>
        <text>Positive cooperativity is observed with ATP as variable substrate, but it is abolished in the presence of UTP.</text>
    </kinetics>
    <phDependence>
        <text evidence="3">Optimum pH is 6.8.</text>
    </phDependence>
</comment>
<comment type="pathway">
    <text>Pyrimidine metabolism; CTP biosynthesis via de novo pathway; UDP from UMP (UMPK route): step 1/1.</text>
</comment>
<comment type="subunit">
    <text evidence="3">Homohexamer; trimer of dimers.</text>
</comment>
<comment type="subcellular location">
    <subcellularLocation>
        <location evidence="1">Cytoplasm</location>
    </subcellularLocation>
</comment>
<comment type="similarity">
    <text evidence="4">Belongs to the UMP kinase family.</text>
</comment>
<reference key="1">
    <citation type="journal article" date="2000" name="Nature">
        <title>The complete sequence of the mucosal pathogen Ureaplasma urealyticum.</title>
        <authorList>
            <person name="Glass J.I."/>
            <person name="Lefkowitz E.J."/>
            <person name="Glass J.S."/>
            <person name="Heiner C.R."/>
            <person name="Chen E.Y."/>
            <person name="Cassell G.H."/>
        </authorList>
    </citation>
    <scope>NUCLEOTIDE SEQUENCE [LARGE SCALE GENOMIC DNA]</scope>
    <source>
        <strain>ATCC 700970</strain>
    </source>
</reference>
<reference key="2">
    <citation type="journal article" date="2007" name="FEBS J.">
        <title>The role of Ureaplasma nucleoside monophosphate kinases in the synthesis of nucleoside triphosphates.</title>
        <authorList>
            <person name="Wang L."/>
        </authorList>
    </citation>
    <scope>FUNCTION</scope>
    <scope>SUBSTRATE SPECIFICITY</scope>
    <source>
        <strain>ATCC 700970</strain>
    </source>
</reference>
<reference key="3">
    <citation type="journal article" date="2007" name="FEBS J.">
        <title>Structural and functional investigations of Ureaplasma parvum UMP kinase - a potential antibacterial drug target.</title>
        <authorList>
            <person name="Egeblad-Welin L."/>
            <person name="Welin M."/>
            <person name="Wang L."/>
            <person name="Eriksson S."/>
        </authorList>
    </citation>
    <scope>X-RAY CRYSTALLOGRAPHY (2.5 ANGSTROMS)</scope>
    <scope>FUNCTION</scope>
    <scope>ACTIVITY REGULATION</scope>
    <scope>SUBSTRATE SPECIFICITY</scope>
    <scope>BIOPHYSICOCHEMICAL PROPERTIES</scope>
    <scope>SUBUNIT</scope>
    <scope>MUTAGENESIS OF PHE-133</scope>
    <source>
        <strain>ATCC 700970</strain>
    </source>
</reference>
<name>PYRH_UREPA</name>
<organism>
    <name type="scientific">Ureaplasma parvum serovar 3 (strain ATCC 700970)</name>
    <dbReference type="NCBI Taxonomy" id="273119"/>
    <lineage>
        <taxon>Bacteria</taxon>
        <taxon>Bacillati</taxon>
        <taxon>Mycoplasmatota</taxon>
        <taxon>Mycoplasmoidales</taxon>
        <taxon>Mycoplasmoidaceae</taxon>
        <taxon>Ureaplasma</taxon>
    </lineage>
</organism>
<dbReference type="EC" id="2.7.4.22"/>
<dbReference type="EMBL" id="AF222894">
    <property type="protein sequence ID" value="AAF30926.1"/>
    <property type="molecule type" value="Genomic_DNA"/>
</dbReference>
<dbReference type="RefSeq" id="WP_006688575.1">
    <property type="nucleotide sequence ID" value="NC_002162.1"/>
</dbReference>
<dbReference type="PDB" id="2VA1">
    <property type="method" value="X-ray"/>
    <property type="resolution" value="2.50 A"/>
    <property type="chains" value="A/B/C/D/E/F=1-235"/>
</dbReference>
<dbReference type="PDBsum" id="2VA1"/>
<dbReference type="SMR" id="Q9PPX6"/>
<dbReference type="STRING" id="273119.UU513"/>
<dbReference type="EnsemblBacteria" id="AAF30926">
    <property type="protein sequence ID" value="AAF30926"/>
    <property type="gene ID" value="UU513"/>
</dbReference>
<dbReference type="GeneID" id="29672214"/>
<dbReference type="KEGG" id="uur:UU513"/>
<dbReference type="eggNOG" id="COG0528">
    <property type="taxonomic scope" value="Bacteria"/>
</dbReference>
<dbReference type="HOGENOM" id="CLU_033861_0_1_14"/>
<dbReference type="OrthoDB" id="9807458at2"/>
<dbReference type="BRENDA" id="2.7.4.22">
    <property type="organism ID" value="9209"/>
</dbReference>
<dbReference type="UniPathway" id="UPA00159">
    <property type="reaction ID" value="UER00275"/>
</dbReference>
<dbReference type="EvolutionaryTrace" id="Q9PPX6"/>
<dbReference type="Proteomes" id="UP000000423">
    <property type="component" value="Chromosome"/>
</dbReference>
<dbReference type="GO" id="GO:0005737">
    <property type="term" value="C:cytoplasm"/>
    <property type="evidence" value="ECO:0007669"/>
    <property type="project" value="UniProtKB-SubCell"/>
</dbReference>
<dbReference type="GO" id="GO:0005524">
    <property type="term" value="F:ATP binding"/>
    <property type="evidence" value="ECO:0007669"/>
    <property type="project" value="UniProtKB-KW"/>
</dbReference>
<dbReference type="GO" id="GO:0033862">
    <property type="term" value="F:UMP kinase activity"/>
    <property type="evidence" value="ECO:0007669"/>
    <property type="project" value="UniProtKB-EC"/>
</dbReference>
<dbReference type="GO" id="GO:0044210">
    <property type="term" value="P:'de novo' CTP biosynthetic process"/>
    <property type="evidence" value="ECO:0007669"/>
    <property type="project" value="UniProtKB-UniRule"/>
</dbReference>
<dbReference type="GO" id="GO:0006225">
    <property type="term" value="P:UDP biosynthetic process"/>
    <property type="evidence" value="ECO:0007669"/>
    <property type="project" value="TreeGrafter"/>
</dbReference>
<dbReference type="CDD" id="cd04254">
    <property type="entry name" value="AAK_UMPK-PyrH-Ec"/>
    <property type="match status" value="1"/>
</dbReference>
<dbReference type="FunFam" id="3.40.1160.10:FF:000001">
    <property type="entry name" value="Uridylate kinase"/>
    <property type="match status" value="1"/>
</dbReference>
<dbReference type="Gene3D" id="3.40.1160.10">
    <property type="entry name" value="Acetylglutamate kinase-like"/>
    <property type="match status" value="1"/>
</dbReference>
<dbReference type="HAMAP" id="MF_01220_B">
    <property type="entry name" value="PyrH_B"/>
    <property type="match status" value="1"/>
</dbReference>
<dbReference type="InterPro" id="IPR036393">
    <property type="entry name" value="AceGlu_kinase-like_sf"/>
</dbReference>
<dbReference type="InterPro" id="IPR001048">
    <property type="entry name" value="Asp/Glu/Uridylate_kinase"/>
</dbReference>
<dbReference type="InterPro" id="IPR011817">
    <property type="entry name" value="Uridylate_kinase"/>
</dbReference>
<dbReference type="InterPro" id="IPR015963">
    <property type="entry name" value="Uridylate_kinase_bac"/>
</dbReference>
<dbReference type="NCBIfam" id="TIGR02075">
    <property type="entry name" value="pyrH_bact"/>
    <property type="match status" value="1"/>
</dbReference>
<dbReference type="PANTHER" id="PTHR42833">
    <property type="entry name" value="URIDYLATE KINASE"/>
    <property type="match status" value="1"/>
</dbReference>
<dbReference type="PANTHER" id="PTHR42833:SF4">
    <property type="entry name" value="URIDYLATE KINASE PUMPKIN, CHLOROPLASTIC"/>
    <property type="match status" value="1"/>
</dbReference>
<dbReference type="Pfam" id="PF00696">
    <property type="entry name" value="AA_kinase"/>
    <property type="match status" value="1"/>
</dbReference>
<dbReference type="PIRSF" id="PIRSF005650">
    <property type="entry name" value="Uridylate_kin"/>
    <property type="match status" value="1"/>
</dbReference>
<dbReference type="SUPFAM" id="SSF53633">
    <property type="entry name" value="Carbamate kinase-like"/>
    <property type="match status" value="1"/>
</dbReference>
<evidence type="ECO:0000250" key="1"/>
<evidence type="ECO:0000269" key="2">
    <source>
    </source>
</evidence>
<evidence type="ECO:0000269" key="3">
    <source>
    </source>
</evidence>
<evidence type="ECO:0000305" key="4"/>
<evidence type="ECO:0007829" key="5">
    <source>
        <dbReference type="PDB" id="2VA1"/>
    </source>
</evidence>
<accession>Q9PPX6</accession>
<protein>
    <recommendedName>
        <fullName>Uridylate kinase</fullName>
        <shortName>UK</shortName>
        <ecNumber>2.7.4.22</ecNumber>
    </recommendedName>
    <alternativeName>
        <fullName>Uridine monophosphate kinase</fullName>
        <shortName>UMP kinase</shortName>
        <shortName>UMPK</shortName>
    </alternativeName>
</protein>